<feature type="signal peptide" evidence="4">
    <location>
        <begin position="1"/>
        <end position="26"/>
    </location>
</feature>
<feature type="chain" id="PRO_0000015068" description="Junctional adhesion molecule A">
    <location>
        <begin position="27"/>
        <end position="300"/>
    </location>
</feature>
<feature type="topological domain" description="Extracellular" evidence="4">
    <location>
        <begin position="27"/>
        <end position="238"/>
    </location>
</feature>
<feature type="transmembrane region" description="Helical" evidence="4">
    <location>
        <begin position="239"/>
        <end position="259"/>
    </location>
</feature>
<feature type="topological domain" description="Cytoplasmic" evidence="4">
    <location>
        <begin position="260"/>
        <end position="300"/>
    </location>
</feature>
<feature type="domain" description="Ig-like V-type 1">
    <location>
        <begin position="28"/>
        <end position="122"/>
    </location>
</feature>
<feature type="domain" description="Ig-like V-type 2">
    <location>
        <begin position="134"/>
        <end position="228"/>
    </location>
</feature>
<feature type="modified residue" description="Phosphoserine" evidence="3">
    <location>
        <position position="282"/>
    </location>
</feature>
<feature type="modified residue" description="Phosphoserine" evidence="7">
    <location>
        <position position="285"/>
    </location>
</feature>
<feature type="modified residue" description="Phosphoserine" evidence="3">
    <location>
        <position position="288"/>
    </location>
</feature>
<feature type="glycosylation site" description="N-linked (GlcNAc...) asparagine" evidence="4">
    <location>
        <position position="185"/>
    </location>
</feature>
<feature type="disulfide bond" evidence="5">
    <location>
        <begin position="49"/>
        <end position="108"/>
    </location>
</feature>
<feature type="disulfide bond" evidence="5">
    <location>
        <begin position="152"/>
        <end position="212"/>
    </location>
</feature>
<organism>
    <name type="scientific">Rattus norvegicus</name>
    <name type="common">Rat</name>
    <dbReference type="NCBI Taxonomy" id="10116"/>
    <lineage>
        <taxon>Eukaryota</taxon>
        <taxon>Metazoa</taxon>
        <taxon>Chordata</taxon>
        <taxon>Craniata</taxon>
        <taxon>Vertebrata</taxon>
        <taxon>Euteleostomi</taxon>
        <taxon>Mammalia</taxon>
        <taxon>Eutheria</taxon>
        <taxon>Euarchontoglires</taxon>
        <taxon>Glires</taxon>
        <taxon>Rodentia</taxon>
        <taxon>Myomorpha</taxon>
        <taxon>Muroidea</taxon>
        <taxon>Muridae</taxon>
        <taxon>Murinae</taxon>
        <taxon>Rattus</taxon>
    </lineage>
</organism>
<name>JAM1_RAT</name>
<sequence length="300" mass="32370">MGTEGKAGSKLLFLFTSMILGSLVQGKGSVYSPQTAVQVPENDSVKLPCIYSGFSSPRVEWKFVQGSTTALVCYNNQITVPYADRVTFSSSGITFSSVTRKDNGEYTCMVSEDGGQNYGEVSIHLTVLVPPSKPTVSIPSSVTIGNRAVLTCSEHDGSPPSEYSWFKDGVPMLTADAKKTRAFINSSYTIDPKSGDLVFDPVSAFDSGEYYCEAQNGYGTAMRSEAVRMEAVELNVGGIVAAVLVTLILLGLLIFGIWFAYSRGYFERTKKGTAPGKKVIYSQPSARSEGEFKQTSSFLV</sequence>
<keyword id="KW-0965">Cell junction</keyword>
<keyword id="KW-1003">Cell membrane</keyword>
<keyword id="KW-1015">Disulfide bond</keyword>
<keyword id="KW-0325">Glycoprotein</keyword>
<keyword id="KW-0393">Immunoglobulin domain</keyword>
<keyword id="KW-0472">Membrane</keyword>
<keyword id="KW-0597">Phosphoprotein</keyword>
<keyword id="KW-1185">Reference proteome</keyword>
<keyword id="KW-0677">Repeat</keyword>
<keyword id="KW-0732">Signal</keyword>
<keyword id="KW-0796">Tight junction</keyword>
<keyword id="KW-0812">Transmembrane</keyword>
<keyword id="KW-1133">Transmembrane helix</keyword>
<comment type="function">
    <text evidence="2 3">Seems to play a role in epithelial tight junction formation. Appears early in primordial forms of cell junctions and recruits PARD3. The association of the PARD6-PARD3 complex may prevent the interaction of PARD3 with JAM1, thereby preventing tight junction assembly. Plays a role in regulating monocyte transmigration involved in integrity of epithelial barrier. Ligand for integrin alpha-L/beta-2 involved in memory T-cell and neutrophil transmigration.</text>
</comment>
<comment type="subunit">
    <text evidence="2 3">Interacts with the ninth PDZ domain of MPDZ. Interacts with the first PDZ domain of PARD3. The association between PARD3 and PARD6B probably disrupts this interaction. Interacts with ITGAL (via I-domain). Interacts with CD151.</text>
</comment>
<comment type="subcellular location">
    <subcellularLocation>
        <location evidence="3">Cell junction</location>
        <location evidence="3">Tight junction</location>
    </subcellularLocation>
    <subcellularLocation>
        <location evidence="3">Cell membrane</location>
        <topology evidence="3">Single-pass type I membrane protein</topology>
    </subcellularLocation>
    <text evidence="3">Localized at tight junctions of both epithelial and endothelial cells.</text>
</comment>
<comment type="domain">
    <text evidence="3">The Ig-like V-type 2 domain is necessary and sufficient for interaction with integrin alpha-L/beta-2.</text>
</comment>
<comment type="PTM">
    <text evidence="1">N-glycosylated.</text>
</comment>
<comment type="similarity">
    <text evidence="6">Belongs to the immunoglobulin superfamily.</text>
</comment>
<accession>Q9JHY1</accession>
<gene>
    <name type="primary">F11r</name>
    <name type="synonym">Jam1</name>
</gene>
<proteinExistence type="evidence at protein level"/>
<reference key="1">
    <citation type="submission" date="2000-06" db="EMBL/GenBank/DDBJ databases">
        <authorList>
            <person name="Mashima H."/>
            <person name="Kojima I."/>
        </authorList>
    </citation>
    <scope>NUCLEOTIDE SEQUENCE [MRNA]</scope>
    <source>
        <strain>Sprague-Dawley</strain>
    </source>
</reference>
<reference key="2">
    <citation type="journal article" date="2004" name="Genome Res.">
        <title>The status, quality, and expansion of the NIH full-length cDNA project: the Mammalian Gene Collection (MGC).</title>
        <authorList>
            <consortium name="The MGC Project Team"/>
        </authorList>
    </citation>
    <scope>NUCLEOTIDE SEQUENCE [LARGE SCALE MRNA]</scope>
    <source>
        <tissue>Prostate</tissue>
    </source>
</reference>
<reference key="3">
    <citation type="journal article" date="2012" name="Nat. Commun.">
        <title>Quantitative maps of protein phosphorylation sites across 14 different rat organs and tissues.</title>
        <authorList>
            <person name="Lundby A."/>
            <person name="Secher A."/>
            <person name="Lage K."/>
            <person name="Nordsborg N.B."/>
            <person name="Dmytriyev A."/>
            <person name="Lundby C."/>
            <person name="Olsen J.V."/>
        </authorList>
    </citation>
    <scope>PHOSPHORYLATION [LARGE SCALE ANALYSIS] AT SER-285</scope>
    <scope>IDENTIFICATION BY MASS SPECTROMETRY [LARGE SCALE ANALYSIS]</scope>
</reference>
<evidence type="ECO:0000250" key="1"/>
<evidence type="ECO:0000250" key="2">
    <source>
        <dbReference type="UniProtKB" id="O88792"/>
    </source>
</evidence>
<evidence type="ECO:0000250" key="3">
    <source>
        <dbReference type="UniProtKB" id="Q9Y624"/>
    </source>
</evidence>
<evidence type="ECO:0000255" key="4"/>
<evidence type="ECO:0000255" key="5">
    <source>
        <dbReference type="PROSITE-ProRule" id="PRU00114"/>
    </source>
</evidence>
<evidence type="ECO:0000305" key="6"/>
<evidence type="ECO:0007744" key="7">
    <source>
    </source>
</evidence>
<protein>
    <recommendedName>
        <fullName>Junctional adhesion molecule A</fullName>
        <shortName>JAM-A</shortName>
    </recommendedName>
    <alternativeName>
        <fullName>Junctional adhesion molecule 1</fullName>
        <shortName>JAM-1</shortName>
    </alternativeName>
    <cdAntigenName>CD321</cdAntigenName>
</protein>
<dbReference type="EMBL" id="AF276998">
    <property type="protein sequence ID" value="AAF78250.1"/>
    <property type="molecule type" value="mRNA"/>
</dbReference>
<dbReference type="EMBL" id="BC065309">
    <property type="protein sequence ID" value="AAH65309.1"/>
    <property type="molecule type" value="mRNA"/>
</dbReference>
<dbReference type="RefSeq" id="NP_446248.1">
    <property type="nucleotide sequence ID" value="NM_053796.1"/>
</dbReference>
<dbReference type="SMR" id="Q9JHY1"/>
<dbReference type="CORUM" id="Q9JHY1"/>
<dbReference type="FunCoup" id="Q9JHY1">
    <property type="interactions" value="997"/>
</dbReference>
<dbReference type="IntAct" id="Q9JHY1">
    <property type="interactions" value="1"/>
</dbReference>
<dbReference type="MINT" id="Q9JHY1"/>
<dbReference type="STRING" id="10116.ENSRNOP00000006141"/>
<dbReference type="GlyCosmos" id="Q9JHY1">
    <property type="glycosylation" value="1 site, No reported glycans"/>
</dbReference>
<dbReference type="GlyGen" id="Q9JHY1">
    <property type="glycosylation" value="1 site"/>
</dbReference>
<dbReference type="iPTMnet" id="Q9JHY1"/>
<dbReference type="PhosphoSitePlus" id="Q9JHY1"/>
<dbReference type="PaxDb" id="10116-ENSRNOP00000006141"/>
<dbReference type="GeneID" id="116479"/>
<dbReference type="KEGG" id="rno:116479"/>
<dbReference type="UCSC" id="RGD:621842">
    <property type="organism name" value="rat"/>
</dbReference>
<dbReference type="AGR" id="RGD:621842"/>
<dbReference type="CTD" id="50848"/>
<dbReference type="RGD" id="621842">
    <property type="gene designation" value="F11r"/>
</dbReference>
<dbReference type="VEuPathDB" id="HostDB:ENSRNOG00000004414"/>
<dbReference type="eggNOG" id="ENOG502QWVN">
    <property type="taxonomic scope" value="Eukaryota"/>
</dbReference>
<dbReference type="HOGENOM" id="CLU_067351_0_0_1"/>
<dbReference type="InParanoid" id="Q9JHY1"/>
<dbReference type="OrthoDB" id="45611at9989"/>
<dbReference type="PhylomeDB" id="Q9JHY1"/>
<dbReference type="TreeFam" id="TF331459"/>
<dbReference type="Reactome" id="R-RNO-202733">
    <property type="pathway name" value="Cell surface interactions at the vascular wall"/>
</dbReference>
<dbReference type="Reactome" id="R-RNO-216083">
    <property type="pathway name" value="Integrin cell surface interactions"/>
</dbReference>
<dbReference type="Reactome" id="R-RNO-2173791">
    <property type="pathway name" value="TGF-beta receptor signaling in EMT (epithelial to mesenchymal transition)"/>
</dbReference>
<dbReference type="Reactome" id="R-RNO-420029">
    <property type="pathway name" value="Tight junction interactions"/>
</dbReference>
<dbReference type="PRO" id="PR:Q9JHY1"/>
<dbReference type="Proteomes" id="UP000002494">
    <property type="component" value="Chromosome 13"/>
</dbReference>
<dbReference type="Bgee" id="ENSRNOG00000004414">
    <property type="expression patterns" value="Expressed in lung and 19 other cell types or tissues"/>
</dbReference>
<dbReference type="GO" id="GO:0005923">
    <property type="term" value="C:bicellular tight junction"/>
    <property type="evidence" value="ECO:0000266"/>
    <property type="project" value="RGD"/>
</dbReference>
<dbReference type="GO" id="GO:0005911">
    <property type="term" value="C:cell-cell junction"/>
    <property type="evidence" value="ECO:0000314"/>
    <property type="project" value="RGD"/>
</dbReference>
<dbReference type="GO" id="GO:0005886">
    <property type="term" value="C:plasma membrane"/>
    <property type="evidence" value="ECO:0007669"/>
    <property type="project" value="UniProtKB-SubCell"/>
</dbReference>
<dbReference type="GO" id="GO:0032991">
    <property type="term" value="C:protein-containing complex"/>
    <property type="evidence" value="ECO:0000266"/>
    <property type="project" value="RGD"/>
</dbReference>
<dbReference type="GO" id="GO:0036057">
    <property type="term" value="C:slit diaphragm"/>
    <property type="evidence" value="ECO:0000314"/>
    <property type="project" value="RGD"/>
</dbReference>
<dbReference type="GO" id="GO:0070160">
    <property type="term" value="C:tight junction"/>
    <property type="evidence" value="ECO:0000266"/>
    <property type="project" value="RGD"/>
</dbReference>
<dbReference type="GO" id="GO:0005178">
    <property type="term" value="F:integrin binding"/>
    <property type="evidence" value="ECO:0000266"/>
    <property type="project" value="RGD"/>
</dbReference>
<dbReference type="GO" id="GO:0030165">
    <property type="term" value="F:PDZ domain binding"/>
    <property type="evidence" value="ECO:0000266"/>
    <property type="project" value="RGD"/>
</dbReference>
<dbReference type="GO" id="GO:0042803">
    <property type="term" value="F:protein homodimerization activity"/>
    <property type="evidence" value="ECO:0000266"/>
    <property type="project" value="RGD"/>
</dbReference>
<dbReference type="GO" id="GO:0031032">
    <property type="term" value="P:actomyosin structure organization"/>
    <property type="evidence" value="ECO:0000266"/>
    <property type="project" value="RGD"/>
</dbReference>
<dbReference type="GO" id="GO:0007155">
    <property type="term" value="P:cell adhesion"/>
    <property type="evidence" value="ECO:0000266"/>
    <property type="project" value="RGD"/>
</dbReference>
<dbReference type="GO" id="GO:0030154">
    <property type="term" value="P:cell differentiation"/>
    <property type="evidence" value="ECO:0000270"/>
    <property type="project" value="RGD"/>
</dbReference>
<dbReference type="GO" id="GO:0098609">
    <property type="term" value="P:cell-cell adhesion"/>
    <property type="evidence" value="ECO:0000266"/>
    <property type="project" value="RGD"/>
</dbReference>
<dbReference type="GO" id="GO:0071260">
    <property type="term" value="P:cellular response to mechanical stimulus"/>
    <property type="evidence" value="ECO:0000266"/>
    <property type="project" value="RGD"/>
</dbReference>
<dbReference type="GO" id="GO:0030855">
    <property type="term" value="P:epithelial cell differentiation"/>
    <property type="evidence" value="ECO:0000266"/>
    <property type="project" value="RGD"/>
</dbReference>
<dbReference type="GO" id="GO:0090557">
    <property type="term" value="P:establishment of endothelial intestinal barrier"/>
    <property type="evidence" value="ECO:0000266"/>
    <property type="project" value="RGD"/>
</dbReference>
<dbReference type="GO" id="GO:0050892">
    <property type="term" value="P:intestinal absorption"/>
    <property type="evidence" value="ECO:0000266"/>
    <property type="project" value="RGD"/>
</dbReference>
<dbReference type="GO" id="GO:0007159">
    <property type="term" value="P:leukocyte cell-cell adhesion"/>
    <property type="evidence" value="ECO:0000266"/>
    <property type="project" value="RGD"/>
</dbReference>
<dbReference type="GO" id="GO:0035683">
    <property type="term" value="P:memory T cell extravasation"/>
    <property type="evidence" value="ECO:0000266"/>
    <property type="project" value="RGD"/>
</dbReference>
<dbReference type="GO" id="GO:0051497">
    <property type="term" value="P:negative regulation of stress fiber assembly"/>
    <property type="evidence" value="ECO:0000266"/>
    <property type="project" value="RGD"/>
</dbReference>
<dbReference type="GO" id="GO:0045777">
    <property type="term" value="P:positive regulation of blood pressure"/>
    <property type="evidence" value="ECO:0000314"/>
    <property type="project" value="RGD"/>
</dbReference>
<dbReference type="GO" id="GO:1903142">
    <property type="term" value="P:positive regulation of establishment of endothelial barrier"/>
    <property type="evidence" value="ECO:0000266"/>
    <property type="project" value="RGD"/>
</dbReference>
<dbReference type="GO" id="GO:1901731">
    <property type="term" value="P:positive regulation of platelet aggregation"/>
    <property type="evidence" value="ECO:0000266"/>
    <property type="project" value="RGD"/>
</dbReference>
<dbReference type="GO" id="GO:0035025">
    <property type="term" value="P:positive regulation of Rho protein signal transduction"/>
    <property type="evidence" value="ECO:0000266"/>
    <property type="project" value="RGD"/>
</dbReference>
<dbReference type="GO" id="GO:1902396">
    <property type="term" value="P:protein localization to bicellular tight junction"/>
    <property type="evidence" value="ECO:0000266"/>
    <property type="project" value="RGD"/>
</dbReference>
<dbReference type="GO" id="GO:0072659">
    <property type="term" value="P:protein localization to plasma membrane"/>
    <property type="evidence" value="ECO:0000266"/>
    <property type="project" value="RGD"/>
</dbReference>
<dbReference type="GO" id="GO:0032956">
    <property type="term" value="P:regulation of actin cytoskeleton organization"/>
    <property type="evidence" value="ECO:0000266"/>
    <property type="project" value="RGD"/>
</dbReference>
<dbReference type="GO" id="GO:2000810">
    <property type="term" value="P:regulation of bicellular tight junction assembly"/>
    <property type="evidence" value="ECO:0000266"/>
    <property type="project" value="RGD"/>
</dbReference>
<dbReference type="GO" id="GO:0008360">
    <property type="term" value="P:regulation of cell shape"/>
    <property type="evidence" value="ECO:0000266"/>
    <property type="project" value="RGD"/>
</dbReference>
<dbReference type="GO" id="GO:0001817">
    <property type="term" value="P:regulation of cytokine production"/>
    <property type="evidence" value="ECO:0000266"/>
    <property type="project" value="RGD"/>
</dbReference>
<dbReference type="GO" id="GO:0051493">
    <property type="term" value="P:regulation of cytoskeleton organization"/>
    <property type="evidence" value="ECO:0000266"/>
    <property type="project" value="RGD"/>
</dbReference>
<dbReference type="GO" id="GO:0090559">
    <property type="term" value="P:regulation of membrane permeability"/>
    <property type="evidence" value="ECO:0000266"/>
    <property type="project" value="RGD"/>
</dbReference>
<dbReference type="FunFam" id="2.60.40.10:FF:000342">
    <property type="entry name" value="Junctional adhesion molecule A"/>
    <property type="match status" value="1"/>
</dbReference>
<dbReference type="FunFam" id="2.60.40.10:FF:000906">
    <property type="entry name" value="Junctional adhesion molecule A"/>
    <property type="match status" value="1"/>
</dbReference>
<dbReference type="Gene3D" id="2.60.40.10">
    <property type="entry name" value="Immunoglobulins"/>
    <property type="match status" value="2"/>
</dbReference>
<dbReference type="InterPro" id="IPR042456">
    <property type="entry name" value="F11R"/>
</dbReference>
<dbReference type="InterPro" id="IPR007110">
    <property type="entry name" value="Ig-like_dom"/>
</dbReference>
<dbReference type="InterPro" id="IPR036179">
    <property type="entry name" value="Ig-like_dom_sf"/>
</dbReference>
<dbReference type="InterPro" id="IPR013783">
    <property type="entry name" value="Ig-like_fold"/>
</dbReference>
<dbReference type="InterPro" id="IPR003599">
    <property type="entry name" value="Ig_sub"/>
</dbReference>
<dbReference type="InterPro" id="IPR003598">
    <property type="entry name" value="Ig_sub2"/>
</dbReference>
<dbReference type="InterPro" id="IPR013106">
    <property type="entry name" value="Ig_V-set"/>
</dbReference>
<dbReference type="PANTHER" id="PTHR45113">
    <property type="entry name" value="JUNCTIONAL ADHESION MOLECULE A"/>
    <property type="match status" value="1"/>
</dbReference>
<dbReference type="PANTHER" id="PTHR45113:SF1">
    <property type="entry name" value="JUNCTIONAL ADHESION MOLECULE A"/>
    <property type="match status" value="1"/>
</dbReference>
<dbReference type="Pfam" id="PF13927">
    <property type="entry name" value="Ig_3"/>
    <property type="match status" value="1"/>
</dbReference>
<dbReference type="Pfam" id="PF07686">
    <property type="entry name" value="V-set"/>
    <property type="match status" value="1"/>
</dbReference>
<dbReference type="SMART" id="SM00409">
    <property type="entry name" value="IG"/>
    <property type="match status" value="2"/>
</dbReference>
<dbReference type="SMART" id="SM00408">
    <property type="entry name" value="IGc2"/>
    <property type="match status" value="2"/>
</dbReference>
<dbReference type="SMART" id="SM00406">
    <property type="entry name" value="IGv"/>
    <property type="match status" value="2"/>
</dbReference>
<dbReference type="SUPFAM" id="SSF48726">
    <property type="entry name" value="Immunoglobulin"/>
    <property type="match status" value="2"/>
</dbReference>
<dbReference type="PROSITE" id="PS50835">
    <property type="entry name" value="IG_LIKE"/>
    <property type="match status" value="2"/>
</dbReference>